<comment type="catalytic activity">
    <reaction evidence="1">
        <text>a quinone + NADH + H(+) = a quinol + NAD(+)</text>
        <dbReference type="Rhea" id="RHEA:46160"/>
        <dbReference type="ChEBI" id="CHEBI:15378"/>
        <dbReference type="ChEBI" id="CHEBI:24646"/>
        <dbReference type="ChEBI" id="CHEBI:57540"/>
        <dbReference type="ChEBI" id="CHEBI:57945"/>
        <dbReference type="ChEBI" id="CHEBI:132124"/>
        <dbReference type="EC" id="1.6.5.2"/>
    </reaction>
</comment>
<comment type="catalytic activity">
    <reaction evidence="1">
        <text>a quinone + NADPH + H(+) = a quinol + NADP(+)</text>
        <dbReference type="Rhea" id="RHEA:46164"/>
        <dbReference type="ChEBI" id="CHEBI:15378"/>
        <dbReference type="ChEBI" id="CHEBI:24646"/>
        <dbReference type="ChEBI" id="CHEBI:57783"/>
        <dbReference type="ChEBI" id="CHEBI:58349"/>
        <dbReference type="ChEBI" id="CHEBI:132124"/>
        <dbReference type="EC" id="1.6.5.2"/>
    </reaction>
</comment>
<comment type="cofactor">
    <cofactor evidence="1">
        <name>FMN</name>
        <dbReference type="ChEBI" id="CHEBI:58210"/>
    </cofactor>
    <text evidence="1">Binds 1 FMN per monomer.</text>
</comment>
<comment type="similarity">
    <text evidence="1">Belongs to the WrbA family.</text>
</comment>
<feature type="chain" id="PRO_0000200745" description="NAD(P)H dehydrogenase (quinone)">
    <location>
        <begin position="1"/>
        <end position="199"/>
    </location>
</feature>
<feature type="domain" description="Flavodoxin-like" evidence="1">
    <location>
        <begin position="4"/>
        <end position="190"/>
    </location>
</feature>
<feature type="binding site" evidence="1">
    <location>
        <begin position="10"/>
        <end position="15"/>
    </location>
    <ligand>
        <name>FMN</name>
        <dbReference type="ChEBI" id="CHEBI:58210"/>
    </ligand>
</feature>
<feature type="binding site" evidence="1">
    <location>
        <position position="12"/>
    </location>
    <ligand>
        <name>NAD(+)</name>
        <dbReference type="ChEBI" id="CHEBI:57540"/>
    </ligand>
</feature>
<feature type="binding site" evidence="1">
    <location>
        <begin position="78"/>
        <end position="80"/>
    </location>
    <ligand>
        <name>FMN</name>
        <dbReference type="ChEBI" id="CHEBI:58210"/>
    </ligand>
</feature>
<feature type="binding site" evidence="1">
    <location>
        <position position="98"/>
    </location>
    <ligand>
        <name>substrate</name>
    </ligand>
</feature>
<feature type="binding site" evidence="1">
    <location>
        <begin position="113"/>
        <end position="119"/>
    </location>
    <ligand>
        <name>FMN</name>
        <dbReference type="ChEBI" id="CHEBI:58210"/>
    </ligand>
</feature>
<feature type="binding site" evidence="1">
    <location>
        <position position="134"/>
    </location>
    <ligand>
        <name>FMN</name>
        <dbReference type="ChEBI" id="CHEBI:58210"/>
    </ligand>
</feature>
<organism>
    <name type="scientific">Caulobacter vibrioides (strain ATCC 19089 / CIP 103742 / CB 15)</name>
    <name type="common">Caulobacter crescentus</name>
    <dbReference type="NCBI Taxonomy" id="190650"/>
    <lineage>
        <taxon>Bacteria</taxon>
        <taxon>Pseudomonadati</taxon>
        <taxon>Pseudomonadota</taxon>
        <taxon>Alphaproteobacteria</taxon>
        <taxon>Caulobacterales</taxon>
        <taxon>Caulobacteraceae</taxon>
        <taxon>Caulobacter</taxon>
    </lineage>
</organism>
<name>NQOR_CAUVC</name>
<protein>
    <recommendedName>
        <fullName evidence="1">NAD(P)H dehydrogenase (quinone)</fullName>
        <ecNumber evidence="1">1.6.5.2</ecNumber>
    </recommendedName>
    <alternativeName>
        <fullName>Flavoprotein WrbA</fullName>
    </alternativeName>
    <alternativeName>
        <fullName evidence="1">NAD(P)H:quinone oxidoreductase</fullName>
        <shortName evidence="1">NQO</shortName>
    </alternativeName>
</protein>
<dbReference type="EC" id="1.6.5.2" evidence="1"/>
<dbReference type="EMBL" id="AE005673">
    <property type="protein sequence ID" value="AAK22776.1"/>
    <property type="molecule type" value="Genomic_DNA"/>
</dbReference>
<dbReference type="PIR" id="D87347">
    <property type="entry name" value="D87347"/>
</dbReference>
<dbReference type="RefSeq" id="NP_419608.1">
    <property type="nucleotide sequence ID" value="NC_002696.2"/>
</dbReference>
<dbReference type="RefSeq" id="WP_010918676.1">
    <property type="nucleotide sequence ID" value="NC_002696.2"/>
</dbReference>
<dbReference type="SMR" id="Q9AA17"/>
<dbReference type="STRING" id="190650.CC_0791"/>
<dbReference type="EnsemblBacteria" id="AAK22776">
    <property type="protein sequence ID" value="AAK22776"/>
    <property type="gene ID" value="CC_0791"/>
</dbReference>
<dbReference type="KEGG" id="ccr:CC_0791"/>
<dbReference type="PATRIC" id="fig|190650.5.peg.803"/>
<dbReference type="eggNOG" id="COG0655">
    <property type="taxonomic scope" value="Bacteria"/>
</dbReference>
<dbReference type="HOGENOM" id="CLU_051402_0_2_5"/>
<dbReference type="BioCyc" id="CAULO:CC0791-MONOMER"/>
<dbReference type="Proteomes" id="UP000001816">
    <property type="component" value="Chromosome"/>
</dbReference>
<dbReference type="GO" id="GO:0016020">
    <property type="term" value="C:membrane"/>
    <property type="evidence" value="ECO:0007669"/>
    <property type="project" value="TreeGrafter"/>
</dbReference>
<dbReference type="GO" id="GO:0050660">
    <property type="term" value="F:flavin adenine dinucleotide binding"/>
    <property type="evidence" value="ECO:0007669"/>
    <property type="project" value="UniProtKB-UniRule"/>
</dbReference>
<dbReference type="GO" id="GO:0010181">
    <property type="term" value="F:FMN binding"/>
    <property type="evidence" value="ECO:0007669"/>
    <property type="project" value="InterPro"/>
</dbReference>
<dbReference type="GO" id="GO:0051287">
    <property type="term" value="F:NAD binding"/>
    <property type="evidence" value="ECO:0007669"/>
    <property type="project" value="UniProtKB-UniRule"/>
</dbReference>
<dbReference type="GO" id="GO:0050136">
    <property type="term" value="F:NADH:ubiquinone reductase (non-electrogenic) activity"/>
    <property type="evidence" value="ECO:0007669"/>
    <property type="project" value="RHEA"/>
</dbReference>
<dbReference type="GO" id="GO:0050661">
    <property type="term" value="F:NADP binding"/>
    <property type="evidence" value="ECO:0007669"/>
    <property type="project" value="UniProtKB-UniRule"/>
</dbReference>
<dbReference type="GO" id="GO:0008753">
    <property type="term" value="F:NADPH dehydrogenase (quinone) activity"/>
    <property type="evidence" value="ECO:0007669"/>
    <property type="project" value="RHEA"/>
</dbReference>
<dbReference type="FunFam" id="3.40.50.360:FF:000001">
    <property type="entry name" value="NAD(P)H dehydrogenase (Quinone) FQR1-like"/>
    <property type="match status" value="1"/>
</dbReference>
<dbReference type="Gene3D" id="3.40.50.360">
    <property type="match status" value="1"/>
</dbReference>
<dbReference type="HAMAP" id="MF_01017">
    <property type="entry name" value="NQOR"/>
    <property type="match status" value="1"/>
</dbReference>
<dbReference type="InterPro" id="IPR008254">
    <property type="entry name" value="Flavodoxin/NO_synth"/>
</dbReference>
<dbReference type="InterPro" id="IPR029039">
    <property type="entry name" value="Flavoprotein-like_sf"/>
</dbReference>
<dbReference type="InterPro" id="IPR010089">
    <property type="entry name" value="Flavoprotein_WrbA-like"/>
</dbReference>
<dbReference type="InterPro" id="IPR005025">
    <property type="entry name" value="FMN_Rdtase-like_dom"/>
</dbReference>
<dbReference type="InterPro" id="IPR037513">
    <property type="entry name" value="NQO"/>
</dbReference>
<dbReference type="NCBIfam" id="TIGR01755">
    <property type="entry name" value="flav_wrbA"/>
    <property type="match status" value="1"/>
</dbReference>
<dbReference type="NCBIfam" id="NF002999">
    <property type="entry name" value="PRK03767.1"/>
    <property type="match status" value="1"/>
</dbReference>
<dbReference type="PANTHER" id="PTHR30546">
    <property type="entry name" value="FLAVODOXIN-RELATED PROTEIN WRBA-RELATED"/>
    <property type="match status" value="1"/>
</dbReference>
<dbReference type="PANTHER" id="PTHR30546:SF23">
    <property type="entry name" value="FLAVOPROTEIN-LIKE PROTEIN YCP4-RELATED"/>
    <property type="match status" value="1"/>
</dbReference>
<dbReference type="Pfam" id="PF03358">
    <property type="entry name" value="FMN_red"/>
    <property type="match status" value="1"/>
</dbReference>
<dbReference type="SUPFAM" id="SSF52218">
    <property type="entry name" value="Flavoproteins"/>
    <property type="match status" value="1"/>
</dbReference>
<dbReference type="PROSITE" id="PS50902">
    <property type="entry name" value="FLAVODOXIN_LIKE"/>
    <property type="match status" value="1"/>
</dbReference>
<keyword id="KW-0285">Flavoprotein</keyword>
<keyword id="KW-0288">FMN</keyword>
<keyword id="KW-0520">NAD</keyword>
<keyword id="KW-0521">NADP</keyword>
<keyword id="KW-0547">Nucleotide-binding</keyword>
<keyword id="KW-0560">Oxidoreductase</keyword>
<keyword id="KW-1185">Reference proteome</keyword>
<accession>Q9AA17</accession>
<reference key="1">
    <citation type="journal article" date="2001" name="Proc. Natl. Acad. Sci. U.S.A.">
        <title>Complete genome sequence of Caulobacter crescentus.</title>
        <authorList>
            <person name="Nierman W.C."/>
            <person name="Feldblyum T.V."/>
            <person name="Laub M.T."/>
            <person name="Paulsen I.T."/>
            <person name="Nelson K.E."/>
            <person name="Eisen J.A."/>
            <person name="Heidelberg J.F."/>
            <person name="Alley M.R.K."/>
            <person name="Ohta N."/>
            <person name="Maddock J.R."/>
            <person name="Potocka I."/>
            <person name="Nelson W.C."/>
            <person name="Newton A."/>
            <person name="Stephens C."/>
            <person name="Phadke N.D."/>
            <person name="Ely B."/>
            <person name="DeBoy R.T."/>
            <person name="Dodson R.J."/>
            <person name="Durkin A.S."/>
            <person name="Gwinn M.L."/>
            <person name="Haft D.H."/>
            <person name="Kolonay J.F."/>
            <person name="Smit J."/>
            <person name="Craven M.B."/>
            <person name="Khouri H.M."/>
            <person name="Shetty J."/>
            <person name="Berry K.J."/>
            <person name="Utterback T.R."/>
            <person name="Tran K."/>
            <person name="Wolf A.M."/>
            <person name="Vamathevan J.J."/>
            <person name="Ermolaeva M.D."/>
            <person name="White O."/>
            <person name="Salzberg S.L."/>
            <person name="Venter J.C."/>
            <person name="Shapiro L."/>
            <person name="Fraser C.M."/>
        </authorList>
    </citation>
    <scope>NUCLEOTIDE SEQUENCE [LARGE SCALE GENOMIC DNA]</scope>
    <source>
        <strain>ATCC 19089 / CIP 103742 / CB 15</strain>
    </source>
</reference>
<evidence type="ECO:0000255" key="1">
    <source>
        <dbReference type="HAMAP-Rule" id="MF_01017"/>
    </source>
</evidence>
<sequence>MAKVLVLYYSSYGHLEVMAKAIAEGAREAGASVDIKRVPETVPLEIAKGAHFKLDQDAPVAKVEDLADYDAIIVGAPTRFGRMASQMAAFFDAAGGLWARGALHGKVAGAFTSTATQHGGQETTLFSIITNMLHFGTTIVGLDYGHAGQMTLDEITGGSPYGATTIAGGDGSRQPSENELTGARYQGRKIAETAIKLHG</sequence>
<proteinExistence type="inferred from homology"/>
<gene>
    <name type="ordered locus">CC_0791</name>
</gene>